<gene>
    <name evidence="1" type="primary">trpC</name>
    <name type="ordered locus">Xfasm12_0182</name>
</gene>
<accession>B0U1P0</accession>
<organism>
    <name type="scientific">Xylella fastidiosa (strain M12)</name>
    <dbReference type="NCBI Taxonomy" id="405440"/>
    <lineage>
        <taxon>Bacteria</taxon>
        <taxon>Pseudomonadati</taxon>
        <taxon>Pseudomonadota</taxon>
        <taxon>Gammaproteobacteria</taxon>
        <taxon>Lysobacterales</taxon>
        <taxon>Lysobacteraceae</taxon>
        <taxon>Xylella</taxon>
    </lineage>
</organism>
<evidence type="ECO:0000255" key="1">
    <source>
        <dbReference type="HAMAP-Rule" id="MF_00134"/>
    </source>
</evidence>
<feature type="chain" id="PRO_1000095910" description="Indole-3-glycerol phosphate synthase">
    <location>
        <begin position="1"/>
        <end position="264"/>
    </location>
</feature>
<dbReference type="EC" id="4.1.1.48" evidence="1"/>
<dbReference type="EMBL" id="CP000941">
    <property type="protein sequence ID" value="ACA11218.1"/>
    <property type="molecule type" value="Genomic_DNA"/>
</dbReference>
<dbReference type="RefSeq" id="WP_012337577.1">
    <property type="nucleotide sequence ID" value="NC_010513.1"/>
</dbReference>
<dbReference type="SMR" id="B0U1P0"/>
<dbReference type="KEGG" id="xfm:Xfasm12_0182"/>
<dbReference type="HOGENOM" id="CLU_034247_2_0_6"/>
<dbReference type="UniPathway" id="UPA00035">
    <property type="reaction ID" value="UER00043"/>
</dbReference>
<dbReference type="GO" id="GO:0004425">
    <property type="term" value="F:indole-3-glycerol-phosphate synthase activity"/>
    <property type="evidence" value="ECO:0007669"/>
    <property type="project" value="UniProtKB-UniRule"/>
</dbReference>
<dbReference type="GO" id="GO:0004640">
    <property type="term" value="F:phosphoribosylanthranilate isomerase activity"/>
    <property type="evidence" value="ECO:0007669"/>
    <property type="project" value="TreeGrafter"/>
</dbReference>
<dbReference type="GO" id="GO:0000162">
    <property type="term" value="P:L-tryptophan biosynthetic process"/>
    <property type="evidence" value="ECO:0007669"/>
    <property type="project" value="UniProtKB-UniRule"/>
</dbReference>
<dbReference type="CDD" id="cd00331">
    <property type="entry name" value="IGPS"/>
    <property type="match status" value="1"/>
</dbReference>
<dbReference type="FunFam" id="3.20.20.70:FF:000024">
    <property type="entry name" value="Indole-3-glycerol phosphate synthase"/>
    <property type="match status" value="1"/>
</dbReference>
<dbReference type="Gene3D" id="3.20.20.70">
    <property type="entry name" value="Aldolase class I"/>
    <property type="match status" value="1"/>
</dbReference>
<dbReference type="HAMAP" id="MF_00134_B">
    <property type="entry name" value="IGPS_B"/>
    <property type="match status" value="1"/>
</dbReference>
<dbReference type="InterPro" id="IPR013785">
    <property type="entry name" value="Aldolase_TIM"/>
</dbReference>
<dbReference type="InterPro" id="IPR045186">
    <property type="entry name" value="Indole-3-glycerol_P_synth"/>
</dbReference>
<dbReference type="InterPro" id="IPR013798">
    <property type="entry name" value="Indole-3-glycerol_P_synth_dom"/>
</dbReference>
<dbReference type="InterPro" id="IPR001468">
    <property type="entry name" value="Indole-3-GlycerolPSynthase_CS"/>
</dbReference>
<dbReference type="InterPro" id="IPR011060">
    <property type="entry name" value="RibuloseP-bd_barrel"/>
</dbReference>
<dbReference type="NCBIfam" id="NF001370">
    <property type="entry name" value="PRK00278.1-2"/>
    <property type="match status" value="1"/>
</dbReference>
<dbReference type="NCBIfam" id="NF001373">
    <property type="entry name" value="PRK00278.1-6"/>
    <property type="match status" value="1"/>
</dbReference>
<dbReference type="NCBIfam" id="NF001377">
    <property type="entry name" value="PRK00278.2-4"/>
    <property type="match status" value="1"/>
</dbReference>
<dbReference type="PANTHER" id="PTHR22854:SF2">
    <property type="entry name" value="INDOLE-3-GLYCEROL-PHOSPHATE SYNTHASE"/>
    <property type="match status" value="1"/>
</dbReference>
<dbReference type="PANTHER" id="PTHR22854">
    <property type="entry name" value="TRYPTOPHAN BIOSYNTHESIS PROTEIN"/>
    <property type="match status" value="1"/>
</dbReference>
<dbReference type="Pfam" id="PF00218">
    <property type="entry name" value="IGPS"/>
    <property type="match status" value="1"/>
</dbReference>
<dbReference type="SUPFAM" id="SSF51366">
    <property type="entry name" value="Ribulose-phoshate binding barrel"/>
    <property type="match status" value="1"/>
</dbReference>
<dbReference type="PROSITE" id="PS00614">
    <property type="entry name" value="IGPS"/>
    <property type="match status" value="1"/>
</dbReference>
<comment type="catalytic activity">
    <reaction evidence="1">
        <text>1-(2-carboxyphenylamino)-1-deoxy-D-ribulose 5-phosphate + H(+) = (1S,2R)-1-C-(indol-3-yl)glycerol 3-phosphate + CO2 + H2O</text>
        <dbReference type="Rhea" id="RHEA:23476"/>
        <dbReference type="ChEBI" id="CHEBI:15377"/>
        <dbReference type="ChEBI" id="CHEBI:15378"/>
        <dbReference type="ChEBI" id="CHEBI:16526"/>
        <dbReference type="ChEBI" id="CHEBI:58613"/>
        <dbReference type="ChEBI" id="CHEBI:58866"/>
        <dbReference type="EC" id="4.1.1.48"/>
    </reaction>
</comment>
<comment type="pathway">
    <text evidence="1">Amino-acid biosynthesis; L-tryptophan biosynthesis; L-tryptophan from chorismate: step 4/5.</text>
</comment>
<comment type="similarity">
    <text evidence="1">Belongs to the TrpC family.</text>
</comment>
<name>TRPC_XYLFM</name>
<reference key="1">
    <citation type="journal article" date="2010" name="J. Bacteriol.">
        <title>Whole genome sequences of two Xylella fastidiosa strains (M12 and M23) causing almond leaf scorch disease in California.</title>
        <authorList>
            <person name="Chen J."/>
            <person name="Xie G."/>
            <person name="Han S."/>
            <person name="Chertkov O."/>
            <person name="Sims D."/>
            <person name="Civerolo E.L."/>
        </authorList>
    </citation>
    <scope>NUCLEOTIDE SEQUENCE [LARGE SCALE GENOMIC DNA]</scope>
    <source>
        <strain>M12</strain>
    </source>
</reference>
<keyword id="KW-0028">Amino-acid biosynthesis</keyword>
<keyword id="KW-0057">Aromatic amino acid biosynthesis</keyword>
<keyword id="KW-0210">Decarboxylase</keyword>
<keyword id="KW-0456">Lyase</keyword>
<keyword id="KW-0822">Tryptophan biosynthesis</keyword>
<protein>
    <recommendedName>
        <fullName evidence="1">Indole-3-glycerol phosphate synthase</fullName>
        <shortName evidence="1">IGPS</shortName>
        <ecNumber evidence="1">4.1.1.48</ecNumber>
    </recommendedName>
</protein>
<proteinExistence type="inferred from homology"/>
<sequence length="264" mass="28681">MSNILTKILARKVEEIAERLLHVSQAELVARCADLPTPRGFAAALQATIVHGDPAVIAEIKKASPSKGVLREDFRPAEIAISYELGGASCLSVLTDVHFFKGHDNYLSQARDACTLPVLRKDFTIDPYQVYEARVLGADCILLIVAALDDAQLVDLSGLALQLGMDVLVEVHDIDELERAIQISAPLIGINNRNLSTFNVSLETTLTMKGLVPRDRLLVSESGILTSADVQRLRAAGVNAFLVGEAFMRAAEPGESLREMFFIT</sequence>